<proteinExistence type="inferred from homology"/>
<reference key="1">
    <citation type="journal article" date="2006" name="J. Bacteriol.">
        <title>Complete genome sequence of Yersinia pestis strains Antiqua and Nepal516: evidence of gene reduction in an emerging pathogen.</title>
        <authorList>
            <person name="Chain P.S.G."/>
            <person name="Hu P."/>
            <person name="Malfatti S.A."/>
            <person name="Radnedge L."/>
            <person name="Larimer F."/>
            <person name="Vergez L.M."/>
            <person name="Worsham P."/>
            <person name="Chu M.C."/>
            <person name="Andersen G.L."/>
        </authorList>
    </citation>
    <scope>NUCLEOTIDE SEQUENCE [LARGE SCALE GENOMIC DNA]</scope>
    <source>
        <strain>Antiqua</strain>
    </source>
</reference>
<organism>
    <name type="scientific">Yersinia pestis bv. Antiqua (strain Antiqua)</name>
    <dbReference type="NCBI Taxonomy" id="360102"/>
    <lineage>
        <taxon>Bacteria</taxon>
        <taxon>Pseudomonadati</taxon>
        <taxon>Pseudomonadota</taxon>
        <taxon>Gammaproteobacteria</taxon>
        <taxon>Enterobacterales</taxon>
        <taxon>Yersiniaceae</taxon>
        <taxon>Yersinia</taxon>
    </lineage>
</organism>
<sequence length="171" mass="18914">MNLQQQLAYCQQHQQRLQLRHFDNETAWQLGEKIKRQAEKQGVALAIDITVNHQTLFSYAMAGTCAENQDWLRRKRNVVELLSTSSYAAGLMLQQRETSLDARYGVSLRDYAALGGAFPLQIKQAGIIGSVNVSGAPHLDDHNLLLQVLADFVGLPTGSIELLTPLTPLSA</sequence>
<gene>
    <name type="ordered locus">YPA_2026</name>
</gene>
<dbReference type="EMBL" id="CP000308">
    <property type="protein sequence ID" value="ABG13992.1"/>
    <property type="molecule type" value="Genomic_DNA"/>
</dbReference>
<dbReference type="RefSeq" id="WP_002210255.1">
    <property type="nucleotide sequence ID" value="NZ_CP009906.1"/>
</dbReference>
<dbReference type="SMR" id="Q1C6D0"/>
<dbReference type="KEGG" id="ypa:YPA_2026"/>
<dbReference type="Proteomes" id="UP000001971">
    <property type="component" value="Chromosome"/>
</dbReference>
<dbReference type="FunFam" id="3.30.450.150:FF:000003">
    <property type="entry name" value="UPF0303 protein YPTS_2661"/>
    <property type="match status" value="1"/>
</dbReference>
<dbReference type="Gene3D" id="3.30.450.150">
    <property type="entry name" value="Haem-degrading domain"/>
    <property type="match status" value="1"/>
</dbReference>
<dbReference type="HAMAP" id="MF_00761">
    <property type="entry name" value="UPF0303"/>
    <property type="match status" value="1"/>
</dbReference>
<dbReference type="InterPro" id="IPR005624">
    <property type="entry name" value="PduO/GlcC-like"/>
</dbReference>
<dbReference type="InterPro" id="IPR038084">
    <property type="entry name" value="PduO/GlcC-like_sf"/>
</dbReference>
<dbReference type="InterPro" id="IPR010371">
    <property type="entry name" value="YBR137W-like"/>
</dbReference>
<dbReference type="NCBIfam" id="NF002694">
    <property type="entry name" value="PRK02487.1-3"/>
    <property type="match status" value="1"/>
</dbReference>
<dbReference type="NCBIfam" id="NF002696">
    <property type="entry name" value="PRK02487.1-5"/>
    <property type="match status" value="1"/>
</dbReference>
<dbReference type="PANTHER" id="PTHR28255">
    <property type="match status" value="1"/>
</dbReference>
<dbReference type="PANTHER" id="PTHR28255:SF1">
    <property type="entry name" value="UPF0303 PROTEIN YBR137W"/>
    <property type="match status" value="1"/>
</dbReference>
<dbReference type="Pfam" id="PF03928">
    <property type="entry name" value="HbpS-like"/>
    <property type="match status" value="1"/>
</dbReference>
<dbReference type="PIRSF" id="PIRSF008757">
    <property type="entry name" value="UCP008757"/>
    <property type="match status" value="1"/>
</dbReference>
<dbReference type="SUPFAM" id="SSF143744">
    <property type="entry name" value="GlcG-like"/>
    <property type="match status" value="1"/>
</dbReference>
<accession>Q1C6D0</accession>
<name>Y2026_YERPA</name>
<evidence type="ECO:0000255" key="1">
    <source>
        <dbReference type="HAMAP-Rule" id="MF_00761"/>
    </source>
</evidence>
<feature type="chain" id="PRO_1000046755" description="UPF0303 protein YPA_2026">
    <location>
        <begin position="1"/>
        <end position="171"/>
    </location>
</feature>
<comment type="similarity">
    <text evidence="1">Belongs to the UPF0303 family.</text>
</comment>
<protein>
    <recommendedName>
        <fullName evidence="1">UPF0303 protein YPA_2026</fullName>
    </recommendedName>
</protein>